<proteinExistence type="evidence at transcript level"/>
<evidence type="ECO:0000250" key="1">
    <source>
        <dbReference type="UniProtKB" id="Q9NRC1"/>
    </source>
</evidence>
<evidence type="ECO:0000255" key="2"/>
<evidence type="ECO:0000303" key="3">
    <source>
    </source>
</evidence>
<evidence type="ECO:0000305" key="4"/>
<dbReference type="EMBL" id="DP000027">
    <property type="protein sequence ID" value="AAR16311.1"/>
    <property type="molecule type" value="Genomic_DNA"/>
</dbReference>
<dbReference type="EMBL" id="BC099820">
    <property type="protein sequence ID" value="AAH99820.1"/>
    <property type="molecule type" value="mRNA"/>
</dbReference>
<dbReference type="RefSeq" id="XP_006236194.1">
    <molecule id="Q2IBD0-1"/>
    <property type="nucleotide sequence ID" value="XM_006236132.3"/>
</dbReference>
<dbReference type="FunCoup" id="Q2IBD0">
    <property type="interactions" value="1655"/>
</dbReference>
<dbReference type="STRING" id="10116.ENSRNOP00000070744"/>
<dbReference type="GlyCosmos" id="Q2IBD0">
    <property type="glycosylation" value="1 site, No reported glycans"/>
</dbReference>
<dbReference type="GlyGen" id="Q2IBD0">
    <property type="glycosylation" value="1 site"/>
</dbReference>
<dbReference type="PhosphoSitePlus" id="Q2IBD0"/>
<dbReference type="PaxDb" id="10116-ENSRNOP00000010219"/>
<dbReference type="Ensembl" id="ENSRNOT00000084736.2">
    <molecule id="Q2IBD0-2"/>
    <property type="protein sequence ID" value="ENSRNOP00000071529.1"/>
    <property type="gene ID" value="ENSRNOG00000056243.2"/>
</dbReference>
<dbReference type="GeneID" id="296911"/>
<dbReference type="UCSC" id="RGD:1303148">
    <molecule id="Q2IBD0-1"/>
    <property type="organism name" value="rat"/>
</dbReference>
<dbReference type="AGR" id="RGD:1303148"/>
<dbReference type="CTD" id="7982"/>
<dbReference type="RGD" id="1303148">
    <property type="gene designation" value="ST7"/>
</dbReference>
<dbReference type="VEuPathDB" id="HostDB:ENSRNOG00000056243"/>
<dbReference type="eggNOG" id="KOG3807">
    <property type="taxonomic scope" value="Eukaryota"/>
</dbReference>
<dbReference type="GeneTree" id="ENSGT00390000000873"/>
<dbReference type="InParanoid" id="Q2IBD0"/>
<dbReference type="OrthoDB" id="35535at9989"/>
<dbReference type="PhylomeDB" id="Q2IBD0"/>
<dbReference type="TreeFam" id="TF314162"/>
<dbReference type="PRO" id="PR:Q2IBD0"/>
<dbReference type="Proteomes" id="UP000002494">
    <property type="component" value="Chromosome 4"/>
</dbReference>
<dbReference type="Bgee" id="ENSRNOG00000056243">
    <property type="expression patterns" value="Expressed in pancreas and 18 other cell types or tissues"/>
</dbReference>
<dbReference type="ExpressionAtlas" id="Q2IBD0">
    <property type="expression patterns" value="baseline and differential"/>
</dbReference>
<dbReference type="GO" id="GO:0016020">
    <property type="term" value="C:membrane"/>
    <property type="evidence" value="ECO:0007669"/>
    <property type="project" value="UniProtKB-SubCell"/>
</dbReference>
<dbReference type="CDD" id="cd11557">
    <property type="entry name" value="ST7"/>
    <property type="match status" value="1"/>
</dbReference>
<dbReference type="InterPro" id="IPR007311">
    <property type="entry name" value="ST7"/>
</dbReference>
<dbReference type="PANTHER" id="PTHR12745">
    <property type="entry name" value="SUPPRESSION OF TUMORIGENICITY 7"/>
    <property type="match status" value="1"/>
</dbReference>
<dbReference type="PANTHER" id="PTHR12745:SF8">
    <property type="entry name" value="SUPPRESSOR OF TUMORIGENICITY 7 PROTEIN"/>
    <property type="match status" value="1"/>
</dbReference>
<dbReference type="Pfam" id="PF04184">
    <property type="entry name" value="ST7"/>
    <property type="match status" value="1"/>
</dbReference>
<sequence length="577" mass="66111">MAEAGSGFLEQLKSCIVWSWTYLWTVWFFLVLFLVYILRVPLRINDNLSTVSMFLNTLTPKFYVALTGTSSLISGLILIFEWWYFRKYGTSFIEQVSVSHLRPLLGGVDNNSSNNSNSSNGDSDSNRQSVSECKVWRNPLNLFRGAEYNRYTWVTGREPLTYYDMNLSAQDHQTFFTCDSDHLRPADAIMQKAWRERNPQARISAAHEALEINEIRSRVEVPLIASSTIWEIKLLPKCATAYILLAEEEATTIAEAEKLFKQALKAGDGCYRRSQQLQHHGSQYEAQHRRDTNVLVYIKRRLAMCARRLGRTREAVKMMRDLMKEFPLLSMFNIHENLLEALLELQAYADVQAVLAKYDDISLPKSATICYTAALLKARAVSDKFSPEAASRRGLSTAEMNAVEAIHRAVEFNPHVPKYLLEMKSLILPPEHILKRGDSEAIAYAFFHLAHWKRVEGALNLLHCTWEGTFRMIPYPLEKGHLFYPYPICTETADRELLPSFHEVSVYPKKELPFFILFTAGLCSFTAMLALLTHQFPELMGVFAKAFLSTLFAPLNFVMEKVESILPSSLWHQLTRI</sequence>
<keyword id="KW-0025">Alternative splicing</keyword>
<keyword id="KW-0325">Glycoprotein</keyword>
<keyword id="KW-0472">Membrane</keyword>
<keyword id="KW-0597">Phosphoprotein</keyword>
<keyword id="KW-1185">Reference proteome</keyword>
<keyword id="KW-0812">Transmembrane</keyword>
<keyword id="KW-1133">Transmembrane helix</keyword>
<gene>
    <name type="primary">St7</name>
</gene>
<organism>
    <name type="scientific">Rattus norvegicus</name>
    <name type="common">Rat</name>
    <dbReference type="NCBI Taxonomy" id="10116"/>
    <lineage>
        <taxon>Eukaryota</taxon>
        <taxon>Metazoa</taxon>
        <taxon>Chordata</taxon>
        <taxon>Craniata</taxon>
        <taxon>Vertebrata</taxon>
        <taxon>Euteleostomi</taxon>
        <taxon>Mammalia</taxon>
        <taxon>Eutheria</taxon>
        <taxon>Euarchontoglires</taxon>
        <taxon>Glires</taxon>
        <taxon>Rodentia</taxon>
        <taxon>Myomorpha</taxon>
        <taxon>Muroidea</taxon>
        <taxon>Muridae</taxon>
        <taxon>Murinae</taxon>
        <taxon>Rattus</taxon>
    </lineage>
</organism>
<comment type="subcellular location">
    <subcellularLocation>
        <location evidence="4">Membrane</location>
        <topology evidence="4">Multi-pass membrane protein</topology>
    </subcellularLocation>
</comment>
<comment type="alternative products">
    <event type="alternative splicing"/>
    <isoform>
        <id>Q2IBD0-1</id>
        <name>1</name>
        <sequence type="displayed"/>
    </isoform>
    <isoform>
        <id>Q2IBD0-2</id>
        <name>2</name>
        <sequence type="described" ref="VSP_034125 VSP_034126"/>
    </isoform>
</comment>
<comment type="similarity">
    <text evidence="4">Belongs to the ST7 family.</text>
</comment>
<accession>Q2IBD0</accession>
<accession>Q499P1</accession>
<reference key="1">
    <citation type="journal article" date="2003" name="Nature">
        <title>Comparative analyses of multi-species sequences from targeted genomic regions.</title>
        <authorList>
            <person name="Thomas J.W."/>
            <person name="Touchman J.W."/>
            <person name="Blakesley R.W."/>
            <person name="Bouffard G.G."/>
            <person name="Beckstrom-Sternberg S.M."/>
            <person name="Margulies E.H."/>
            <person name="Blanchette M."/>
            <person name="Siepel A.C."/>
            <person name="Thomas P.J."/>
            <person name="McDowell J.C."/>
            <person name="Maskeri B."/>
            <person name="Hansen N.F."/>
            <person name="Schwartz M.S."/>
            <person name="Weber R.J."/>
            <person name="Kent W.J."/>
            <person name="Karolchik D."/>
            <person name="Bruen T.C."/>
            <person name="Bevan R."/>
            <person name="Cutler D.J."/>
            <person name="Schwartz S."/>
            <person name="Elnitski L."/>
            <person name="Idol J.R."/>
            <person name="Prasad A.B."/>
            <person name="Lee-Lin S.-Q."/>
            <person name="Maduro V.V.B."/>
            <person name="Summers T.J."/>
            <person name="Portnoy M.E."/>
            <person name="Dietrich N.L."/>
            <person name="Akhter N."/>
            <person name="Ayele K."/>
            <person name="Benjamin B."/>
            <person name="Cariaga K."/>
            <person name="Brinkley C.P."/>
            <person name="Brooks S.Y."/>
            <person name="Granite S."/>
            <person name="Guan X."/>
            <person name="Gupta J."/>
            <person name="Haghighi P."/>
            <person name="Ho S.-L."/>
            <person name="Huang M.C."/>
            <person name="Karlins E."/>
            <person name="Laric P.L."/>
            <person name="Legaspi R."/>
            <person name="Lim M.J."/>
            <person name="Maduro Q.L."/>
            <person name="Masiello C.A."/>
            <person name="Mastrian S.D."/>
            <person name="McCloskey J.C."/>
            <person name="Pearson R."/>
            <person name="Stantripop S."/>
            <person name="Tiongson E.E."/>
            <person name="Tran J.T."/>
            <person name="Tsurgeon C."/>
            <person name="Vogt J.L."/>
            <person name="Walker M.A."/>
            <person name="Wetherby K.D."/>
            <person name="Wiggins L.S."/>
            <person name="Young A.C."/>
            <person name="Zhang L.-H."/>
            <person name="Osoegawa K."/>
            <person name="Zhu B."/>
            <person name="Zhao B."/>
            <person name="Shu C.L."/>
            <person name="De Jong P.J."/>
            <person name="Lawrence C.E."/>
            <person name="Smit A.F."/>
            <person name="Chakravarti A."/>
            <person name="Haussler D."/>
            <person name="Green P."/>
            <person name="Miller W."/>
            <person name="Green E.D."/>
        </authorList>
    </citation>
    <scope>NUCLEOTIDE SEQUENCE [LARGE SCALE GENOMIC DNA]</scope>
    <source>
        <strain>Brown Norway</strain>
    </source>
</reference>
<reference key="2">
    <citation type="journal article" date="2004" name="Genome Res.">
        <title>The status, quality, and expansion of the NIH full-length cDNA project: the Mammalian Gene Collection (MGC).</title>
        <authorList>
            <consortium name="The MGC Project Team"/>
        </authorList>
    </citation>
    <scope>NUCLEOTIDE SEQUENCE [LARGE SCALE MRNA] (ISOFORM 2)</scope>
    <source>
        <tissue>Prostate</tissue>
    </source>
</reference>
<protein>
    <recommendedName>
        <fullName>Suppressor of tumorigenicity 7 protein</fullName>
    </recommendedName>
</protein>
<name>ST7_RAT</name>
<feature type="chain" id="PRO_0000339215" description="Suppressor of tumorigenicity 7 protein">
    <location>
        <begin position="1"/>
        <end position="577"/>
    </location>
</feature>
<feature type="transmembrane region" description="Helical" evidence="2">
    <location>
        <begin position="15"/>
        <end position="35"/>
    </location>
</feature>
<feature type="transmembrane region" description="Helical" evidence="2">
    <location>
        <begin position="62"/>
        <end position="82"/>
    </location>
</feature>
<feature type="transmembrane region" description="Helical" evidence="2">
    <location>
        <begin position="512"/>
        <end position="532"/>
    </location>
</feature>
<feature type="transmembrane region" description="Helical" evidence="2">
    <location>
        <begin position="539"/>
        <end position="559"/>
    </location>
</feature>
<feature type="modified residue" description="Phosphoserine" evidence="1">
    <location>
        <position position="386"/>
    </location>
</feature>
<feature type="glycosylation site" description="N-linked (GlcNAc...) asparagine" evidence="2">
    <location>
        <position position="47"/>
    </location>
</feature>
<feature type="splice variant" id="VSP_034125" description="In isoform 2." evidence="3">
    <location>
        <begin position="215"/>
        <end position="237"/>
    </location>
</feature>
<feature type="splice variant" id="VSP_034126" description="In isoform 2." evidence="3">
    <location>
        <begin position="470"/>
        <end position="500"/>
    </location>
</feature>
<feature type="sequence conflict" description="In Ref. 2; AAH99820." evidence="4" ref="2">
    <original>S</original>
    <variation>A</variation>
    <location>
        <position position="6"/>
    </location>
</feature>